<organism>
    <name type="scientific">Escherichia coli O17:K52:H18 (strain UMN026 / ExPEC)</name>
    <dbReference type="NCBI Taxonomy" id="585056"/>
    <lineage>
        <taxon>Bacteria</taxon>
        <taxon>Pseudomonadati</taxon>
        <taxon>Pseudomonadota</taxon>
        <taxon>Gammaproteobacteria</taxon>
        <taxon>Enterobacterales</taxon>
        <taxon>Enterobacteriaceae</taxon>
        <taxon>Escherichia</taxon>
    </lineage>
</organism>
<sequence>MENLNMDLLYMAAAVMMGLAAIGAAIGIGILGGKFLEGAARQPDLIPLLRTQFFIVMGLVDAIPMIAVGLGLYVMFAVA</sequence>
<comment type="function">
    <text evidence="1">F(1)F(0) ATP synthase produces ATP from ADP in the presence of a proton or sodium gradient. F-type ATPases consist of two structural domains, F(1) containing the extramembraneous catalytic core and F(0) containing the membrane proton channel, linked together by a central stalk and a peripheral stalk. During catalysis, ATP synthesis in the catalytic domain of F(1) is coupled via a rotary mechanism of the central stalk subunits to proton translocation.</text>
</comment>
<comment type="function">
    <text evidence="1">Key component of the F(0) channel; it plays a direct role in translocation across the membrane. A homomeric c-ring of between 10-14 subunits forms the central stalk rotor element with the F(1) delta and epsilon subunits.</text>
</comment>
<comment type="subunit">
    <text evidence="1">F-type ATPases have 2 components, F(1) - the catalytic core - and F(0) - the membrane proton channel. F(1) has five subunits: alpha(3), beta(3), gamma(1), delta(1), epsilon(1). F(0) has three main subunits: a(1), b(2) and c(10-14). The alpha and beta chains form an alternating ring which encloses part of the gamma chain. F(1) is attached to F(0) by a central stalk formed by the gamma and epsilon chains, while a peripheral stalk is formed by the delta and b chains.</text>
</comment>
<comment type="subcellular location">
    <subcellularLocation>
        <location evidence="1">Cell inner membrane</location>
        <topology evidence="1">Multi-pass membrane protein</topology>
    </subcellularLocation>
</comment>
<comment type="similarity">
    <text evidence="1">Belongs to the ATPase C chain family.</text>
</comment>
<dbReference type="EMBL" id="CU928163">
    <property type="protein sequence ID" value="CAR15407.1"/>
    <property type="molecule type" value="Genomic_DNA"/>
</dbReference>
<dbReference type="RefSeq" id="WP_000429386.1">
    <property type="nucleotide sequence ID" value="NC_011751.1"/>
</dbReference>
<dbReference type="RefSeq" id="YP_002414902.1">
    <property type="nucleotide sequence ID" value="NC_011751.1"/>
</dbReference>
<dbReference type="SMR" id="B7NF53"/>
<dbReference type="STRING" id="585056.ECUMN_4267"/>
<dbReference type="GeneID" id="98390858"/>
<dbReference type="KEGG" id="eum:ECUMN_4267"/>
<dbReference type="PATRIC" id="fig|585056.7.peg.4438"/>
<dbReference type="HOGENOM" id="CLU_148047_1_0_6"/>
<dbReference type="PRO" id="PR:B7NF53"/>
<dbReference type="Proteomes" id="UP000007097">
    <property type="component" value="Chromosome"/>
</dbReference>
<dbReference type="GO" id="GO:0005886">
    <property type="term" value="C:plasma membrane"/>
    <property type="evidence" value="ECO:0007669"/>
    <property type="project" value="UniProtKB-SubCell"/>
</dbReference>
<dbReference type="GO" id="GO:0045259">
    <property type="term" value="C:proton-transporting ATP synthase complex"/>
    <property type="evidence" value="ECO:0007669"/>
    <property type="project" value="UniProtKB-KW"/>
</dbReference>
<dbReference type="GO" id="GO:0033177">
    <property type="term" value="C:proton-transporting two-sector ATPase complex, proton-transporting domain"/>
    <property type="evidence" value="ECO:0007669"/>
    <property type="project" value="InterPro"/>
</dbReference>
<dbReference type="GO" id="GO:0008289">
    <property type="term" value="F:lipid binding"/>
    <property type="evidence" value="ECO:0007669"/>
    <property type="project" value="UniProtKB-KW"/>
</dbReference>
<dbReference type="GO" id="GO:0046933">
    <property type="term" value="F:proton-transporting ATP synthase activity, rotational mechanism"/>
    <property type="evidence" value="ECO:0007669"/>
    <property type="project" value="UniProtKB-UniRule"/>
</dbReference>
<dbReference type="CDD" id="cd18185">
    <property type="entry name" value="ATP-synt_Fo_c_ATPE"/>
    <property type="match status" value="1"/>
</dbReference>
<dbReference type="FunFam" id="1.20.20.10:FF:000002">
    <property type="entry name" value="ATP synthase subunit c"/>
    <property type="match status" value="1"/>
</dbReference>
<dbReference type="Gene3D" id="1.20.20.10">
    <property type="entry name" value="F1F0 ATP synthase subunit C"/>
    <property type="match status" value="1"/>
</dbReference>
<dbReference type="HAMAP" id="MF_01396">
    <property type="entry name" value="ATP_synth_c_bact"/>
    <property type="match status" value="1"/>
</dbReference>
<dbReference type="InterPro" id="IPR005953">
    <property type="entry name" value="ATP_synth_csu_bac/chlpt"/>
</dbReference>
<dbReference type="InterPro" id="IPR000454">
    <property type="entry name" value="ATP_synth_F0_csu"/>
</dbReference>
<dbReference type="InterPro" id="IPR020537">
    <property type="entry name" value="ATP_synth_F0_csu_DDCD_BS"/>
</dbReference>
<dbReference type="InterPro" id="IPR038662">
    <property type="entry name" value="ATP_synth_F0_csu_sf"/>
</dbReference>
<dbReference type="InterPro" id="IPR002379">
    <property type="entry name" value="ATPase_proteolipid_c-like_dom"/>
</dbReference>
<dbReference type="InterPro" id="IPR035921">
    <property type="entry name" value="F/V-ATP_Csub_sf"/>
</dbReference>
<dbReference type="NCBIfam" id="TIGR01260">
    <property type="entry name" value="ATP_synt_c"/>
    <property type="match status" value="1"/>
</dbReference>
<dbReference type="NCBIfam" id="NF005363">
    <property type="entry name" value="PRK06876.1"/>
    <property type="match status" value="1"/>
</dbReference>
<dbReference type="Pfam" id="PF00137">
    <property type="entry name" value="ATP-synt_C"/>
    <property type="match status" value="1"/>
</dbReference>
<dbReference type="PRINTS" id="PR00124">
    <property type="entry name" value="ATPASEC"/>
</dbReference>
<dbReference type="SUPFAM" id="SSF81333">
    <property type="entry name" value="F1F0 ATP synthase subunit C"/>
    <property type="match status" value="1"/>
</dbReference>
<dbReference type="PROSITE" id="PS00605">
    <property type="entry name" value="ATPASE_C"/>
    <property type="match status" value="1"/>
</dbReference>
<keyword id="KW-0066">ATP synthesis</keyword>
<keyword id="KW-0997">Cell inner membrane</keyword>
<keyword id="KW-1003">Cell membrane</keyword>
<keyword id="KW-0138">CF(0)</keyword>
<keyword id="KW-0375">Hydrogen ion transport</keyword>
<keyword id="KW-0406">Ion transport</keyword>
<keyword id="KW-0446">Lipid-binding</keyword>
<keyword id="KW-0472">Membrane</keyword>
<keyword id="KW-0812">Transmembrane</keyword>
<keyword id="KW-1133">Transmembrane helix</keyword>
<keyword id="KW-0813">Transport</keyword>
<name>ATPL_ECOLU</name>
<evidence type="ECO:0000255" key="1">
    <source>
        <dbReference type="HAMAP-Rule" id="MF_01396"/>
    </source>
</evidence>
<gene>
    <name evidence="1" type="primary">atpE</name>
    <name type="ordered locus">ECUMN_4267</name>
</gene>
<reference key="1">
    <citation type="journal article" date="2009" name="PLoS Genet.">
        <title>Organised genome dynamics in the Escherichia coli species results in highly diverse adaptive paths.</title>
        <authorList>
            <person name="Touchon M."/>
            <person name="Hoede C."/>
            <person name="Tenaillon O."/>
            <person name="Barbe V."/>
            <person name="Baeriswyl S."/>
            <person name="Bidet P."/>
            <person name="Bingen E."/>
            <person name="Bonacorsi S."/>
            <person name="Bouchier C."/>
            <person name="Bouvet O."/>
            <person name="Calteau A."/>
            <person name="Chiapello H."/>
            <person name="Clermont O."/>
            <person name="Cruveiller S."/>
            <person name="Danchin A."/>
            <person name="Diard M."/>
            <person name="Dossat C."/>
            <person name="Karoui M.E."/>
            <person name="Frapy E."/>
            <person name="Garry L."/>
            <person name="Ghigo J.M."/>
            <person name="Gilles A.M."/>
            <person name="Johnson J."/>
            <person name="Le Bouguenec C."/>
            <person name="Lescat M."/>
            <person name="Mangenot S."/>
            <person name="Martinez-Jehanne V."/>
            <person name="Matic I."/>
            <person name="Nassif X."/>
            <person name="Oztas S."/>
            <person name="Petit M.A."/>
            <person name="Pichon C."/>
            <person name="Rouy Z."/>
            <person name="Ruf C.S."/>
            <person name="Schneider D."/>
            <person name="Tourret J."/>
            <person name="Vacherie B."/>
            <person name="Vallenet D."/>
            <person name="Medigue C."/>
            <person name="Rocha E.P.C."/>
            <person name="Denamur E."/>
        </authorList>
    </citation>
    <scope>NUCLEOTIDE SEQUENCE [LARGE SCALE GENOMIC DNA]</scope>
    <source>
        <strain>UMN026 / ExPEC</strain>
    </source>
</reference>
<feature type="chain" id="PRO_1000184372" description="ATP synthase subunit c">
    <location>
        <begin position="1"/>
        <end position="79"/>
    </location>
</feature>
<feature type="transmembrane region" description="Helical" evidence="1">
    <location>
        <begin position="11"/>
        <end position="31"/>
    </location>
</feature>
<feature type="transmembrane region" description="Helical" evidence="1">
    <location>
        <begin position="53"/>
        <end position="73"/>
    </location>
</feature>
<feature type="site" description="Reversibly protonated during proton transport" evidence="1">
    <location>
        <position position="61"/>
    </location>
</feature>
<accession>B7NF53</accession>
<proteinExistence type="inferred from homology"/>
<protein>
    <recommendedName>
        <fullName evidence="1">ATP synthase subunit c</fullName>
    </recommendedName>
    <alternativeName>
        <fullName evidence="1">ATP synthase F(0) sector subunit c</fullName>
    </alternativeName>
    <alternativeName>
        <fullName evidence="1">F-type ATPase subunit c</fullName>
        <shortName evidence="1">F-ATPase subunit c</shortName>
    </alternativeName>
    <alternativeName>
        <fullName evidence="1">Lipid-binding protein</fullName>
    </alternativeName>
</protein>